<name>AVAE_ASPVE</name>
<reference key="1">
    <citation type="journal article" date="2023" name="Nat. Chem. Biol.">
        <title>Genome mining for unknown-unknown natural products.</title>
        <authorList>
            <person name="Yee D.A."/>
            <person name="Niwa K."/>
            <person name="Perlatti B."/>
            <person name="Chen M."/>
            <person name="Li Y."/>
            <person name="Tang Y."/>
        </authorList>
    </citation>
    <scope>NUCLEOTIDE SEQUENCE [GENOMIC DNA]</scope>
    <scope>FUNCTION</scope>
    <scope>CATALYTIC ACTIVITY</scope>
    <source>
        <strain>dI-29</strain>
    </source>
</reference>
<proteinExistence type="evidence at protein level"/>
<keyword id="KW-0238">DNA-binding</keyword>
<keyword id="KW-0539">Nucleus</keyword>
<keyword id="KW-0804">Transcription</keyword>
<keyword id="KW-0805">Transcription regulation</keyword>
<comment type="function">
    <text evidence="2">Putative transcription factor; part of the cluster that mediates the biosynthesis of a highly modified cyclo-arginine-tryptophan dipeptide (cRW).</text>
</comment>
<comment type="pathway">
    <text evidence="4">Secondary metabolite biosynthesis.</text>
</comment>
<comment type="subcellular location">
    <subcellularLocation>
        <location evidence="1">Nucleus</location>
    </subcellularLocation>
</comment>
<accession>P9WEK6</accession>
<gene>
    <name evidence="3" type="primary">avaE</name>
</gene>
<dbReference type="EMBL" id="OP596311">
    <property type="protein sequence ID" value="UZP48217.1"/>
    <property type="molecule type" value="Genomic_DNA"/>
</dbReference>
<dbReference type="GO" id="GO:0005634">
    <property type="term" value="C:nucleus"/>
    <property type="evidence" value="ECO:0007669"/>
    <property type="project" value="UniProtKB-SubCell"/>
</dbReference>
<dbReference type="GO" id="GO:0003677">
    <property type="term" value="F:DNA binding"/>
    <property type="evidence" value="ECO:0007669"/>
    <property type="project" value="UniProtKB-KW"/>
</dbReference>
<dbReference type="GO" id="GO:0044550">
    <property type="term" value="P:secondary metabolite biosynthetic process"/>
    <property type="evidence" value="ECO:0007669"/>
    <property type="project" value="UniProtKB-ARBA"/>
</dbReference>
<dbReference type="CDD" id="cd06262">
    <property type="entry name" value="metallo-hydrolase-like_MBL-fold"/>
    <property type="match status" value="1"/>
</dbReference>
<dbReference type="Gene3D" id="3.60.15.10">
    <property type="entry name" value="Ribonuclease Z/Hydroxyacylglutathione hydrolase-like"/>
    <property type="match status" value="1"/>
</dbReference>
<dbReference type="InterPro" id="IPR001279">
    <property type="entry name" value="Metallo-B-lactamas"/>
</dbReference>
<dbReference type="InterPro" id="IPR050855">
    <property type="entry name" value="NDM-1-like"/>
</dbReference>
<dbReference type="InterPro" id="IPR036866">
    <property type="entry name" value="RibonucZ/Hydroxyglut_hydro"/>
</dbReference>
<dbReference type="PANTHER" id="PTHR42951:SF4">
    <property type="entry name" value="ACYL-COENZYME A THIOESTERASE MBLAC2"/>
    <property type="match status" value="1"/>
</dbReference>
<dbReference type="PANTHER" id="PTHR42951">
    <property type="entry name" value="METALLO-BETA-LACTAMASE DOMAIN-CONTAINING"/>
    <property type="match status" value="1"/>
</dbReference>
<dbReference type="Pfam" id="PF00753">
    <property type="entry name" value="Lactamase_B"/>
    <property type="match status" value="1"/>
</dbReference>
<dbReference type="SMART" id="SM00849">
    <property type="entry name" value="Lactamase_B"/>
    <property type="match status" value="1"/>
</dbReference>
<dbReference type="SUPFAM" id="SSF56281">
    <property type="entry name" value="Metallo-hydrolase/oxidoreductase"/>
    <property type="match status" value="1"/>
</dbReference>
<evidence type="ECO:0000255" key="1">
    <source>
        <dbReference type="PROSITE-ProRule" id="PRU00223"/>
    </source>
</evidence>
<evidence type="ECO:0000269" key="2">
    <source>
    </source>
</evidence>
<evidence type="ECO:0000303" key="3">
    <source>
    </source>
</evidence>
<evidence type="ECO:0000305" key="4">
    <source>
    </source>
</evidence>
<sequence length="336" mass="37427">MCINPADEQDYESYSLRMTAHLIESSSVTSFTATRLNQTTFRLVEDDRHIERPMVYVKLYATCVVVIDTGCNSPRNTELPVTSLRRFIETVPLDQNESMPLNPDGRLPYYILLSHCHYDHIGGLESFQGSPYHIYCSQRLSETIANSRLHHDSLRESCSLPPLELDLEKMTGVPDGYSLVDANSVELNLQLLHAPGHSPDHMVVLDLDESTIFLGDSAYEQSPLFYAYGGDLTLHIQTLARLETLLTTYETCEGAPIWTAACGHFSSGLNAVSLLQRTKTFILDVIEGKVPSRSQEANPYQSGGVLEFFTRDELAMACPDHLLKDARGSSISLCSS</sequence>
<organism>
    <name type="scientific">Aspergillus versicolor</name>
    <dbReference type="NCBI Taxonomy" id="46472"/>
    <lineage>
        <taxon>Eukaryota</taxon>
        <taxon>Fungi</taxon>
        <taxon>Dikarya</taxon>
        <taxon>Ascomycota</taxon>
        <taxon>Pezizomycotina</taxon>
        <taxon>Eurotiomycetes</taxon>
        <taxon>Eurotiomycetidae</taxon>
        <taxon>Eurotiales</taxon>
        <taxon>Aspergillaceae</taxon>
        <taxon>Aspergillus</taxon>
        <taxon>Aspergillus subgen. Nidulantes</taxon>
    </lineage>
</organism>
<protein>
    <recommendedName>
        <fullName evidence="3">Putative transcription factor avaE</fullName>
    </recommendedName>
    <alternativeName>
        <fullName evidence="3">Ava biosynthesis cluster protein E</fullName>
    </alternativeName>
</protein>
<feature type="chain" id="PRO_0000461022" description="Putative transcription factor avaE">
    <location>
        <begin position="1"/>
        <end position="336"/>
    </location>
</feature>
<feature type="DNA-binding region" description="WRKY" evidence="1">
    <location>
        <begin position="32"/>
        <end position="100"/>
    </location>
</feature>